<accession>Q60C67</accession>
<feature type="chain" id="PRO_0000160382" description="ATP-dependent Clp protease ATP-binding subunit ClpX 1">
    <location>
        <begin position="1"/>
        <end position="422"/>
    </location>
</feature>
<feature type="domain" description="ClpX-type ZB" evidence="2">
    <location>
        <begin position="4"/>
        <end position="57"/>
    </location>
</feature>
<feature type="binding site" evidence="2">
    <location>
        <position position="16"/>
    </location>
    <ligand>
        <name>Zn(2+)</name>
        <dbReference type="ChEBI" id="CHEBI:29105"/>
    </ligand>
</feature>
<feature type="binding site" evidence="2">
    <location>
        <position position="19"/>
    </location>
    <ligand>
        <name>Zn(2+)</name>
        <dbReference type="ChEBI" id="CHEBI:29105"/>
    </ligand>
</feature>
<feature type="binding site" evidence="2">
    <location>
        <position position="38"/>
    </location>
    <ligand>
        <name>Zn(2+)</name>
        <dbReference type="ChEBI" id="CHEBI:29105"/>
    </ligand>
</feature>
<feature type="binding site" evidence="2">
    <location>
        <position position="41"/>
    </location>
    <ligand>
        <name>Zn(2+)</name>
        <dbReference type="ChEBI" id="CHEBI:29105"/>
    </ligand>
</feature>
<feature type="binding site" evidence="1">
    <location>
        <begin position="120"/>
        <end position="127"/>
    </location>
    <ligand>
        <name>ATP</name>
        <dbReference type="ChEBI" id="CHEBI:30616"/>
    </ligand>
</feature>
<gene>
    <name evidence="1" type="primary">clpX1</name>
    <name type="synonym">clpX-1</name>
    <name type="ordered locus">MCA0243</name>
</gene>
<name>CLPX1_METCA</name>
<organism>
    <name type="scientific">Methylococcus capsulatus (strain ATCC 33009 / NCIMB 11132 / Bath)</name>
    <dbReference type="NCBI Taxonomy" id="243233"/>
    <lineage>
        <taxon>Bacteria</taxon>
        <taxon>Pseudomonadati</taxon>
        <taxon>Pseudomonadota</taxon>
        <taxon>Gammaproteobacteria</taxon>
        <taxon>Methylococcales</taxon>
        <taxon>Methylococcaceae</taxon>
        <taxon>Methylococcus</taxon>
    </lineage>
</organism>
<evidence type="ECO:0000255" key="1">
    <source>
        <dbReference type="HAMAP-Rule" id="MF_00175"/>
    </source>
</evidence>
<evidence type="ECO:0000255" key="2">
    <source>
        <dbReference type="PROSITE-ProRule" id="PRU01250"/>
    </source>
</evidence>
<comment type="function">
    <text evidence="1">ATP-dependent specificity component of the Clp protease. It directs the protease to specific substrates. Can perform chaperone functions in the absence of ClpP.</text>
</comment>
<comment type="subunit">
    <text evidence="1">Component of the ClpX-ClpP complex. Forms a hexameric ring that, in the presence of ATP, binds to fourteen ClpP subunits assembled into a disk-like structure with a central cavity, resembling the structure of eukaryotic proteasomes.</text>
</comment>
<comment type="similarity">
    <text evidence="1">Belongs to the ClpX chaperone family.</text>
</comment>
<proteinExistence type="inferred from homology"/>
<sequence length="422" mass="46437">MNEDRKNRESGKLLYCSFCGKSQHEVRKLIAGPAVFVCDECVELCNDIIREDLQGSEAGGVEGLPKPKEMKAILDQYVIGQDKAKRILSVAVYNHYKRLKARTFRNDVELAKSNVLLIGPTGSGKTLLAETLARVLDVPFTIADATTLTEAGYVGEDVENIIQKLLLACDYDVEKAEQGIVYIDEIDKISRKADSPSITRDVSGEGVQQALLKLMEGTVASVPPQGGRKHPQQEFLQVNTANILFICGGAFAGLDKTIRSRSERSGIGFSAEVKSKEENTNVGEILAGVEAEDLIRYGLIPEFIGRLPVVATLEELDEAALVRILIEPKNALVKQYARLFEMEGCELEILPEALGAIARRAMERKTGARGLRTIIEHALLDTMYELPSAEDVGKVVVDAKVIRGETEPHRVYRSVERQRVSA</sequence>
<protein>
    <recommendedName>
        <fullName evidence="1">ATP-dependent Clp protease ATP-binding subunit ClpX 1</fullName>
    </recommendedName>
</protein>
<dbReference type="EMBL" id="AE017282">
    <property type="protein sequence ID" value="AAU90604.1"/>
    <property type="molecule type" value="Genomic_DNA"/>
</dbReference>
<dbReference type="RefSeq" id="WP_010959608.1">
    <property type="nucleotide sequence ID" value="NC_002977.6"/>
</dbReference>
<dbReference type="SMR" id="Q60C67"/>
<dbReference type="STRING" id="243233.MCA0243"/>
<dbReference type="GeneID" id="88222588"/>
<dbReference type="KEGG" id="mca:MCA0243"/>
<dbReference type="eggNOG" id="COG1219">
    <property type="taxonomic scope" value="Bacteria"/>
</dbReference>
<dbReference type="HOGENOM" id="CLU_014218_8_2_6"/>
<dbReference type="Proteomes" id="UP000006821">
    <property type="component" value="Chromosome"/>
</dbReference>
<dbReference type="GO" id="GO:0009376">
    <property type="term" value="C:HslUV protease complex"/>
    <property type="evidence" value="ECO:0007669"/>
    <property type="project" value="TreeGrafter"/>
</dbReference>
<dbReference type="GO" id="GO:0005524">
    <property type="term" value="F:ATP binding"/>
    <property type="evidence" value="ECO:0007669"/>
    <property type="project" value="UniProtKB-UniRule"/>
</dbReference>
<dbReference type="GO" id="GO:0016887">
    <property type="term" value="F:ATP hydrolysis activity"/>
    <property type="evidence" value="ECO:0007669"/>
    <property type="project" value="InterPro"/>
</dbReference>
<dbReference type="GO" id="GO:0140662">
    <property type="term" value="F:ATP-dependent protein folding chaperone"/>
    <property type="evidence" value="ECO:0007669"/>
    <property type="project" value="InterPro"/>
</dbReference>
<dbReference type="GO" id="GO:0046983">
    <property type="term" value="F:protein dimerization activity"/>
    <property type="evidence" value="ECO:0007669"/>
    <property type="project" value="InterPro"/>
</dbReference>
<dbReference type="GO" id="GO:0051082">
    <property type="term" value="F:unfolded protein binding"/>
    <property type="evidence" value="ECO:0007669"/>
    <property type="project" value="UniProtKB-UniRule"/>
</dbReference>
<dbReference type="GO" id="GO:0008270">
    <property type="term" value="F:zinc ion binding"/>
    <property type="evidence" value="ECO:0007669"/>
    <property type="project" value="InterPro"/>
</dbReference>
<dbReference type="GO" id="GO:0051301">
    <property type="term" value="P:cell division"/>
    <property type="evidence" value="ECO:0007669"/>
    <property type="project" value="TreeGrafter"/>
</dbReference>
<dbReference type="GO" id="GO:0051603">
    <property type="term" value="P:proteolysis involved in protein catabolic process"/>
    <property type="evidence" value="ECO:0007669"/>
    <property type="project" value="TreeGrafter"/>
</dbReference>
<dbReference type="CDD" id="cd19497">
    <property type="entry name" value="RecA-like_ClpX"/>
    <property type="match status" value="1"/>
</dbReference>
<dbReference type="FunFam" id="1.10.8.60:FF:000002">
    <property type="entry name" value="ATP-dependent Clp protease ATP-binding subunit ClpX"/>
    <property type="match status" value="1"/>
</dbReference>
<dbReference type="FunFam" id="3.40.50.300:FF:000005">
    <property type="entry name" value="ATP-dependent Clp protease ATP-binding subunit ClpX"/>
    <property type="match status" value="1"/>
</dbReference>
<dbReference type="Gene3D" id="1.10.8.60">
    <property type="match status" value="1"/>
</dbReference>
<dbReference type="Gene3D" id="6.20.220.10">
    <property type="entry name" value="ClpX chaperone, C4-type zinc finger domain"/>
    <property type="match status" value="1"/>
</dbReference>
<dbReference type="Gene3D" id="3.40.50.300">
    <property type="entry name" value="P-loop containing nucleotide triphosphate hydrolases"/>
    <property type="match status" value="1"/>
</dbReference>
<dbReference type="HAMAP" id="MF_00175">
    <property type="entry name" value="ClpX"/>
    <property type="match status" value="1"/>
</dbReference>
<dbReference type="InterPro" id="IPR003593">
    <property type="entry name" value="AAA+_ATPase"/>
</dbReference>
<dbReference type="InterPro" id="IPR050052">
    <property type="entry name" value="ATP-dep_Clp_protease_ClpX"/>
</dbReference>
<dbReference type="InterPro" id="IPR003959">
    <property type="entry name" value="ATPase_AAA_core"/>
</dbReference>
<dbReference type="InterPro" id="IPR019489">
    <property type="entry name" value="Clp_ATPase_C"/>
</dbReference>
<dbReference type="InterPro" id="IPR004487">
    <property type="entry name" value="Clp_protease_ATP-bd_su_ClpX"/>
</dbReference>
<dbReference type="InterPro" id="IPR046425">
    <property type="entry name" value="ClpX_bact"/>
</dbReference>
<dbReference type="InterPro" id="IPR027417">
    <property type="entry name" value="P-loop_NTPase"/>
</dbReference>
<dbReference type="InterPro" id="IPR010603">
    <property type="entry name" value="Znf_CppX_C4"/>
</dbReference>
<dbReference type="InterPro" id="IPR038366">
    <property type="entry name" value="Znf_CppX_C4_sf"/>
</dbReference>
<dbReference type="NCBIfam" id="TIGR00382">
    <property type="entry name" value="clpX"/>
    <property type="match status" value="1"/>
</dbReference>
<dbReference type="NCBIfam" id="NF003745">
    <property type="entry name" value="PRK05342.1"/>
    <property type="match status" value="1"/>
</dbReference>
<dbReference type="PANTHER" id="PTHR48102:SF7">
    <property type="entry name" value="ATP-DEPENDENT CLP PROTEASE ATP-BINDING SUBUNIT CLPX-LIKE, MITOCHONDRIAL"/>
    <property type="match status" value="1"/>
</dbReference>
<dbReference type="PANTHER" id="PTHR48102">
    <property type="entry name" value="ATP-DEPENDENT CLP PROTEASE ATP-BINDING SUBUNIT CLPX-LIKE, MITOCHONDRIAL-RELATED"/>
    <property type="match status" value="1"/>
</dbReference>
<dbReference type="Pfam" id="PF07724">
    <property type="entry name" value="AAA_2"/>
    <property type="match status" value="1"/>
</dbReference>
<dbReference type="Pfam" id="PF10431">
    <property type="entry name" value="ClpB_D2-small"/>
    <property type="match status" value="1"/>
</dbReference>
<dbReference type="Pfam" id="PF06689">
    <property type="entry name" value="zf-C4_ClpX"/>
    <property type="match status" value="1"/>
</dbReference>
<dbReference type="SMART" id="SM00382">
    <property type="entry name" value="AAA"/>
    <property type="match status" value="1"/>
</dbReference>
<dbReference type="SMART" id="SM01086">
    <property type="entry name" value="ClpB_D2-small"/>
    <property type="match status" value="1"/>
</dbReference>
<dbReference type="SMART" id="SM00994">
    <property type="entry name" value="zf-C4_ClpX"/>
    <property type="match status" value="1"/>
</dbReference>
<dbReference type="SUPFAM" id="SSF57716">
    <property type="entry name" value="Glucocorticoid receptor-like (DNA-binding domain)"/>
    <property type="match status" value="1"/>
</dbReference>
<dbReference type="SUPFAM" id="SSF52540">
    <property type="entry name" value="P-loop containing nucleoside triphosphate hydrolases"/>
    <property type="match status" value="1"/>
</dbReference>
<dbReference type="PROSITE" id="PS51902">
    <property type="entry name" value="CLPX_ZB"/>
    <property type="match status" value="1"/>
</dbReference>
<keyword id="KW-0067">ATP-binding</keyword>
<keyword id="KW-0143">Chaperone</keyword>
<keyword id="KW-0479">Metal-binding</keyword>
<keyword id="KW-0547">Nucleotide-binding</keyword>
<keyword id="KW-1185">Reference proteome</keyword>
<keyword id="KW-0862">Zinc</keyword>
<reference key="1">
    <citation type="journal article" date="2004" name="PLoS Biol.">
        <title>Genomic insights into methanotrophy: the complete genome sequence of Methylococcus capsulatus (Bath).</title>
        <authorList>
            <person name="Ward N.L."/>
            <person name="Larsen O."/>
            <person name="Sakwa J."/>
            <person name="Bruseth L."/>
            <person name="Khouri H.M."/>
            <person name="Durkin A.S."/>
            <person name="Dimitrov G."/>
            <person name="Jiang L."/>
            <person name="Scanlan D."/>
            <person name="Kang K.H."/>
            <person name="Lewis M.R."/>
            <person name="Nelson K.E."/>
            <person name="Methe B.A."/>
            <person name="Wu M."/>
            <person name="Heidelberg J.F."/>
            <person name="Paulsen I.T."/>
            <person name="Fouts D.E."/>
            <person name="Ravel J."/>
            <person name="Tettelin H."/>
            <person name="Ren Q."/>
            <person name="Read T.D."/>
            <person name="DeBoy R.T."/>
            <person name="Seshadri R."/>
            <person name="Salzberg S.L."/>
            <person name="Jensen H.B."/>
            <person name="Birkeland N.K."/>
            <person name="Nelson W.C."/>
            <person name="Dodson R.J."/>
            <person name="Grindhaug S.H."/>
            <person name="Holt I.E."/>
            <person name="Eidhammer I."/>
            <person name="Jonasen I."/>
            <person name="Vanaken S."/>
            <person name="Utterback T.R."/>
            <person name="Feldblyum T.V."/>
            <person name="Fraser C.M."/>
            <person name="Lillehaug J.R."/>
            <person name="Eisen J.A."/>
        </authorList>
    </citation>
    <scope>NUCLEOTIDE SEQUENCE [LARGE SCALE GENOMIC DNA]</scope>
    <source>
        <strain>ATCC 33009 / NCIMB 11132 / Bath</strain>
    </source>
</reference>